<comment type="function">
    <text evidence="1">Involved in the biosynthesis of the chorismate, which leads to the biosynthesis of aromatic amino acids. Catalyzes the reversible NADPH linked reduction of 3-dehydroshikimate (DHSA) to yield shikimate (SA).</text>
</comment>
<comment type="catalytic activity">
    <reaction evidence="1">
        <text>shikimate + NADP(+) = 3-dehydroshikimate + NADPH + H(+)</text>
        <dbReference type="Rhea" id="RHEA:17737"/>
        <dbReference type="ChEBI" id="CHEBI:15378"/>
        <dbReference type="ChEBI" id="CHEBI:16630"/>
        <dbReference type="ChEBI" id="CHEBI:36208"/>
        <dbReference type="ChEBI" id="CHEBI:57783"/>
        <dbReference type="ChEBI" id="CHEBI:58349"/>
        <dbReference type="EC" id="1.1.1.25"/>
    </reaction>
</comment>
<comment type="pathway">
    <text evidence="1">Metabolic intermediate biosynthesis; chorismate biosynthesis; chorismate from D-erythrose 4-phosphate and phosphoenolpyruvate: step 4/7.</text>
</comment>
<comment type="subunit">
    <text evidence="1">Homodimer.</text>
</comment>
<comment type="similarity">
    <text evidence="1">Belongs to the shikimate dehydrogenase family.</text>
</comment>
<dbReference type="EC" id="1.1.1.25" evidence="1"/>
<dbReference type="EMBL" id="CP000388">
    <property type="protein sequence ID" value="ABG38564.1"/>
    <property type="molecule type" value="Genomic_DNA"/>
</dbReference>
<dbReference type="RefSeq" id="WP_011572978.1">
    <property type="nucleotide sequence ID" value="NC_008228.1"/>
</dbReference>
<dbReference type="SMR" id="Q15ZX4"/>
<dbReference type="STRING" id="342610.Patl_0031"/>
<dbReference type="KEGG" id="pat:Patl_0031"/>
<dbReference type="eggNOG" id="COG0169">
    <property type="taxonomic scope" value="Bacteria"/>
</dbReference>
<dbReference type="HOGENOM" id="CLU_044063_2_1_6"/>
<dbReference type="OrthoDB" id="9776868at2"/>
<dbReference type="UniPathway" id="UPA00053">
    <property type="reaction ID" value="UER00087"/>
</dbReference>
<dbReference type="Proteomes" id="UP000001981">
    <property type="component" value="Chromosome"/>
</dbReference>
<dbReference type="GO" id="GO:0005829">
    <property type="term" value="C:cytosol"/>
    <property type="evidence" value="ECO:0007669"/>
    <property type="project" value="TreeGrafter"/>
</dbReference>
<dbReference type="GO" id="GO:0050661">
    <property type="term" value="F:NADP binding"/>
    <property type="evidence" value="ECO:0007669"/>
    <property type="project" value="InterPro"/>
</dbReference>
<dbReference type="GO" id="GO:0004764">
    <property type="term" value="F:shikimate 3-dehydrogenase (NADP+) activity"/>
    <property type="evidence" value="ECO:0007669"/>
    <property type="project" value="UniProtKB-UniRule"/>
</dbReference>
<dbReference type="GO" id="GO:0008652">
    <property type="term" value="P:amino acid biosynthetic process"/>
    <property type="evidence" value="ECO:0007669"/>
    <property type="project" value="UniProtKB-KW"/>
</dbReference>
<dbReference type="GO" id="GO:0009073">
    <property type="term" value="P:aromatic amino acid family biosynthetic process"/>
    <property type="evidence" value="ECO:0007669"/>
    <property type="project" value="UniProtKB-KW"/>
</dbReference>
<dbReference type="GO" id="GO:0009423">
    <property type="term" value="P:chorismate biosynthetic process"/>
    <property type="evidence" value="ECO:0007669"/>
    <property type="project" value="UniProtKB-UniRule"/>
</dbReference>
<dbReference type="GO" id="GO:0019632">
    <property type="term" value="P:shikimate metabolic process"/>
    <property type="evidence" value="ECO:0007669"/>
    <property type="project" value="InterPro"/>
</dbReference>
<dbReference type="CDD" id="cd01065">
    <property type="entry name" value="NAD_bind_Shikimate_DH"/>
    <property type="match status" value="1"/>
</dbReference>
<dbReference type="FunFam" id="3.40.50.10860:FF:000006">
    <property type="entry name" value="Shikimate dehydrogenase (NADP(+))"/>
    <property type="match status" value="1"/>
</dbReference>
<dbReference type="Gene3D" id="3.40.50.10860">
    <property type="entry name" value="Leucine Dehydrogenase, chain A, domain 1"/>
    <property type="match status" value="1"/>
</dbReference>
<dbReference type="Gene3D" id="3.40.50.720">
    <property type="entry name" value="NAD(P)-binding Rossmann-like Domain"/>
    <property type="match status" value="1"/>
</dbReference>
<dbReference type="HAMAP" id="MF_00222">
    <property type="entry name" value="Shikimate_DH_AroE"/>
    <property type="match status" value="1"/>
</dbReference>
<dbReference type="InterPro" id="IPR046346">
    <property type="entry name" value="Aminoacid_DH-like_N_sf"/>
</dbReference>
<dbReference type="InterPro" id="IPR036291">
    <property type="entry name" value="NAD(P)-bd_dom_sf"/>
</dbReference>
<dbReference type="InterPro" id="IPR041121">
    <property type="entry name" value="SDH_C"/>
</dbReference>
<dbReference type="InterPro" id="IPR011342">
    <property type="entry name" value="Shikimate_DH"/>
</dbReference>
<dbReference type="InterPro" id="IPR013708">
    <property type="entry name" value="Shikimate_DH-bd_N"/>
</dbReference>
<dbReference type="InterPro" id="IPR022893">
    <property type="entry name" value="Shikimate_DH_fam"/>
</dbReference>
<dbReference type="InterPro" id="IPR006151">
    <property type="entry name" value="Shikm_DH/Glu-tRNA_Rdtase"/>
</dbReference>
<dbReference type="NCBIfam" id="TIGR00507">
    <property type="entry name" value="aroE"/>
    <property type="match status" value="1"/>
</dbReference>
<dbReference type="NCBIfam" id="NF001310">
    <property type="entry name" value="PRK00258.1-2"/>
    <property type="match status" value="1"/>
</dbReference>
<dbReference type="PANTHER" id="PTHR21089:SF1">
    <property type="entry name" value="BIFUNCTIONAL 3-DEHYDROQUINATE DEHYDRATASE_SHIKIMATE DEHYDROGENASE, CHLOROPLASTIC"/>
    <property type="match status" value="1"/>
</dbReference>
<dbReference type="PANTHER" id="PTHR21089">
    <property type="entry name" value="SHIKIMATE DEHYDROGENASE"/>
    <property type="match status" value="1"/>
</dbReference>
<dbReference type="Pfam" id="PF18317">
    <property type="entry name" value="SDH_C"/>
    <property type="match status" value="1"/>
</dbReference>
<dbReference type="Pfam" id="PF01488">
    <property type="entry name" value="Shikimate_DH"/>
    <property type="match status" value="1"/>
</dbReference>
<dbReference type="Pfam" id="PF08501">
    <property type="entry name" value="Shikimate_dh_N"/>
    <property type="match status" value="1"/>
</dbReference>
<dbReference type="SUPFAM" id="SSF53223">
    <property type="entry name" value="Aminoacid dehydrogenase-like, N-terminal domain"/>
    <property type="match status" value="1"/>
</dbReference>
<dbReference type="SUPFAM" id="SSF51735">
    <property type="entry name" value="NAD(P)-binding Rossmann-fold domains"/>
    <property type="match status" value="1"/>
</dbReference>
<proteinExistence type="inferred from homology"/>
<sequence length="272" mass="29936">MDRYAVFGNPIEHSKSPLIHTLFAKQTQQVIEYGRQQPDSNGFNDAINAFFTEGFIGANVTSPFKLDAFRFADELTPRARAAEAVNTLYKRQDGSILGDNTDGAGLVQDLQRLWGELNGKRLLLIGAGGATRGVILPLLTAKVQNIHIANRTASKAQQLADRFKKEGVITASGFNDLPEIQFDLIVNCTSSSLDGGLPEITPSIFINASYAYDMTYKAQATSFMVWAQECTPSIRTADGLGMLVGQAAESFYVWRKVRPKIEPIIEIVREML</sequence>
<reference key="1">
    <citation type="submission" date="2006-06" db="EMBL/GenBank/DDBJ databases">
        <title>Complete sequence of Pseudoalteromonas atlantica T6c.</title>
        <authorList>
            <consortium name="US DOE Joint Genome Institute"/>
            <person name="Copeland A."/>
            <person name="Lucas S."/>
            <person name="Lapidus A."/>
            <person name="Barry K."/>
            <person name="Detter J.C."/>
            <person name="Glavina del Rio T."/>
            <person name="Hammon N."/>
            <person name="Israni S."/>
            <person name="Dalin E."/>
            <person name="Tice H."/>
            <person name="Pitluck S."/>
            <person name="Saunders E."/>
            <person name="Brettin T."/>
            <person name="Bruce D."/>
            <person name="Han C."/>
            <person name="Tapia R."/>
            <person name="Gilna P."/>
            <person name="Schmutz J."/>
            <person name="Larimer F."/>
            <person name="Land M."/>
            <person name="Hauser L."/>
            <person name="Kyrpides N."/>
            <person name="Kim E."/>
            <person name="Karls A.C."/>
            <person name="Bartlett D."/>
            <person name="Higgins B.P."/>
            <person name="Richardson P."/>
        </authorList>
    </citation>
    <scope>NUCLEOTIDE SEQUENCE [LARGE SCALE GENOMIC DNA]</scope>
    <source>
        <strain>T6c / ATCC BAA-1087</strain>
    </source>
</reference>
<evidence type="ECO:0000255" key="1">
    <source>
        <dbReference type="HAMAP-Rule" id="MF_00222"/>
    </source>
</evidence>
<protein>
    <recommendedName>
        <fullName evidence="1">Shikimate dehydrogenase (NADP(+))</fullName>
        <shortName evidence="1">SDH</shortName>
        <ecNumber evidence="1">1.1.1.25</ecNumber>
    </recommendedName>
</protein>
<accession>Q15ZX4</accession>
<organism>
    <name type="scientific">Pseudoalteromonas atlantica (strain T6c / ATCC BAA-1087)</name>
    <dbReference type="NCBI Taxonomy" id="3042615"/>
    <lineage>
        <taxon>Bacteria</taxon>
        <taxon>Pseudomonadati</taxon>
        <taxon>Pseudomonadota</taxon>
        <taxon>Gammaproteobacteria</taxon>
        <taxon>Alteromonadales</taxon>
        <taxon>Alteromonadaceae</taxon>
        <taxon>Paraglaciecola</taxon>
    </lineage>
</organism>
<name>AROE_PSEA6</name>
<gene>
    <name evidence="1" type="primary">aroE</name>
    <name type="ordered locus">Patl_0031</name>
</gene>
<keyword id="KW-0028">Amino-acid biosynthesis</keyword>
<keyword id="KW-0057">Aromatic amino acid biosynthesis</keyword>
<keyword id="KW-0521">NADP</keyword>
<keyword id="KW-0560">Oxidoreductase</keyword>
<feature type="chain" id="PRO_1000021316" description="Shikimate dehydrogenase (NADP(+))">
    <location>
        <begin position="1"/>
        <end position="272"/>
    </location>
</feature>
<feature type="active site" description="Proton acceptor" evidence="1">
    <location>
        <position position="65"/>
    </location>
</feature>
<feature type="binding site" evidence="1">
    <location>
        <begin position="14"/>
        <end position="16"/>
    </location>
    <ligand>
        <name>shikimate</name>
        <dbReference type="ChEBI" id="CHEBI:36208"/>
    </ligand>
</feature>
<feature type="binding site" evidence="1">
    <location>
        <position position="61"/>
    </location>
    <ligand>
        <name>shikimate</name>
        <dbReference type="ChEBI" id="CHEBI:36208"/>
    </ligand>
</feature>
<feature type="binding site" evidence="1">
    <location>
        <position position="86"/>
    </location>
    <ligand>
        <name>shikimate</name>
        <dbReference type="ChEBI" id="CHEBI:36208"/>
    </ligand>
</feature>
<feature type="binding site" evidence="1">
    <location>
        <position position="102"/>
    </location>
    <ligand>
        <name>shikimate</name>
        <dbReference type="ChEBI" id="CHEBI:36208"/>
    </ligand>
</feature>
<feature type="binding site" evidence="1">
    <location>
        <begin position="126"/>
        <end position="130"/>
    </location>
    <ligand>
        <name>NADP(+)</name>
        <dbReference type="ChEBI" id="CHEBI:58349"/>
    </ligand>
</feature>
<feature type="binding site" evidence="1">
    <location>
        <begin position="150"/>
        <end position="155"/>
    </location>
    <ligand>
        <name>NADP(+)</name>
        <dbReference type="ChEBI" id="CHEBI:58349"/>
    </ligand>
</feature>
<feature type="binding site" evidence="1">
    <location>
        <position position="214"/>
    </location>
    <ligand>
        <name>NADP(+)</name>
        <dbReference type="ChEBI" id="CHEBI:58349"/>
    </ligand>
</feature>
<feature type="binding site" evidence="1">
    <location>
        <position position="216"/>
    </location>
    <ligand>
        <name>shikimate</name>
        <dbReference type="ChEBI" id="CHEBI:36208"/>
    </ligand>
</feature>
<feature type="binding site" evidence="1">
    <location>
        <position position="239"/>
    </location>
    <ligand>
        <name>NADP(+)</name>
        <dbReference type="ChEBI" id="CHEBI:58349"/>
    </ligand>
</feature>